<organism>
    <name type="scientific">Archaeoglobus fulgidus (strain ATCC 49558 / DSM 4304 / JCM 9628 / NBRC 100126 / VC-16)</name>
    <dbReference type="NCBI Taxonomy" id="224325"/>
    <lineage>
        <taxon>Archaea</taxon>
        <taxon>Methanobacteriati</taxon>
        <taxon>Methanobacteriota</taxon>
        <taxon>Archaeoglobi</taxon>
        <taxon>Archaeoglobales</taxon>
        <taxon>Archaeoglobaceae</taxon>
        <taxon>Archaeoglobus</taxon>
    </lineage>
</organism>
<reference key="1">
    <citation type="journal article" date="1997" name="Nature">
        <title>The complete genome sequence of the hyperthermophilic, sulphate-reducing archaeon Archaeoglobus fulgidus.</title>
        <authorList>
            <person name="Klenk H.-P."/>
            <person name="Clayton R.A."/>
            <person name="Tomb J.-F."/>
            <person name="White O."/>
            <person name="Nelson K.E."/>
            <person name="Ketchum K.A."/>
            <person name="Dodson R.J."/>
            <person name="Gwinn M.L."/>
            <person name="Hickey E.K."/>
            <person name="Peterson J.D."/>
            <person name="Richardson D.L."/>
            <person name="Kerlavage A.R."/>
            <person name="Graham D.E."/>
            <person name="Kyrpides N.C."/>
            <person name="Fleischmann R.D."/>
            <person name="Quackenbush J."/>
            <person name="Lee N.H."/>
            <person name="Sutton G.G."/>
            <person name="Gill S.R."/>
            <person name="Kirkness E.F."/>
            <person name="Dougherty B.A."/>
            <person name="McKenney K."/>
            <person name="Adams M.D."/>
            <person name="Loftus B.J."/>
            <person name="Peterson S.N."/>
            <person name="Reich C.I."/>
            <person name="McNeil L.K."/>
            <person name="Badger J.H."/>
            <person name="Glodek A."/>
            <person name="Zhou L."/>
            <person name="Overbeek R."/>
            <person name="Gocayne J.D."/>
            <person name="Weidman J.F."/>
            <person name="McDonald L.A."/>
            <person name="Utterback T.R."/>
            <person name="Cotton M.D."/>
            <person name="Spriggs T."/>
            <person name="Artiach P."/>
            <person name="Kaine B.P."/>
            <person name="Sykes S.M."/>
            <person name="Sadow P.W."/>
            <person name="D'Andrea K.P."/>
            <person name="Bowman C."/>
            <person name="Fujii C."/>
            <person name="Garland S.A."/>
            <person name="Mason T.M."/>
            <person name="Olsen G.J."/>
            <person name="Fraser C.M."/>
            <person name="Smith H.O."/>
            <person name="Woese C.R."/>
            <person name="Venter J.C."/>
        </authorList>
    </citation>
    <scope>NUCLEOTIDE SEQUENCE [LARGE SCALE GENOMIC DNA]</scope>
    <source>
        <strain>ATCC 49558 / DSM 4304 / JCM 9628 / NBRC 100126 / VC-16</strain>
    </source>
</reference>
<name>Y1856_ARCFU</name>
<protein>
    <recommendedName>
        <fullName>Uncharacterized protein AF_1856</fullName>
    </recommendedName>
</protein>
<accession>O28422</accession>
<dbReference type="EMBL" id="AE000782">
    <property type="protein sequence ID" value="AAB89404.1"/>
    <property type="molecule type" value="Genomic_DNA"/>
</dbReference>
<dbReference type="PIR" id="G69481">
    <property type="entry name" value="G69481"/>
</dbReference>
<dbReference type="RefSeq" id="WP_010879350.1">
    <property type="nucleotide sequence ID" value="NC_000917.1"/>
</dbReference>
<dbReference type="PaxDb" id="224325-AF_1856"/>
<dbReference type="EnsemblBacteria" id="AAB89404">
    <property type="protein sequence ID" value="AAB89404"/>
    <property type="gene ID" value="AF_1856"/>
</dbReference>
<dbReference type="KEGG" id="afu:AF_1856"/>
<dbReference type="eggNOG" id="arCOG04460">
    <property type="taxonomic scope" value="Archaea"/>
</dbReference>
<dbReference type="HOGENOM" id="CLU_030859_0_0_2"/>
<dbReference type="OrthoDB" id="142266at2157"/>
<dbReference type="Proteomes" id="UP000002199">
    <property type="component" value="Chromosome"/>
</dbReference>
<keyword id="KW-1185">Reference proteome</keyword>
<sequence length="614" mass="65511">MEEREKVVFAATLAATFKPDLMTNDKIEAATKGHGTLVIPVLCAANSIAEDMFGAVEEPGMRLMGSATLVDAAAPLLPLDLVIQKAVNEAKNAGASPENAALIVAALAYFSGAAARAGVPMANRKLGAMARMHAGASRTSGIALVTNKFTHRMPTFPAYKAVFEQLLDKKLTRVDGSVLPPFIAGGAIYGHSALGEDVNIPELAKNAAKVGTEAMMRAMEGAGITPYPLWPALIGATVAMEILHPDAFLGEEYGAFGSVDSAYMAGKGAAEAAGLPEKIHVRGTGEEFDTARVIGDFGLILKDIGGSSVIDSMALNEIFAGFEESPIIGAGFSGGPVNPPLGHLCGDSVPAIRLLMKYEGDIYKVAEEIRNYKMNSFIDPEMALCALNTITRKAEEVKRGPVTRACMIASENVRGRAVYRRAVKAYEMLKEGKSVDEVAKALDEERKAYVEKRGSAILSAFTGKKIEFRFTELRPQARRTDGFTKKYWGFDSYISYDVTIDGKTYHIENLSAKAVVDFALEGKGRDDPDYGTALFAGAVLAQELQYIGHTIINVTVPAAVAAILGADEKDAAKMAENGAYLTRAIPGAKNNAKEVAKLAKMIYSRLQEKGEILP</sequence>
<proteinExistence type="predicted"/>
<feature type="chain" id="PRO_0000128064" description="Uncharacterized protein AF_1856">
    <location>
        <begin position="1"/>
        <end position="614"/>
    </location>
</feature>
<gene>
    <name type="ordered locus">AF_1856</name>
</gene>